<dbReference type="EMBL" id="Z18946">
    <property type="protein sequence ID" value="CAA79432.1"/>
    <property type="molecule type" value="Genomic_DNA"/>
</dbReference>
<dbReference type="PIR" id="S31001">
    <property type="entry name" value="S31001"/>
</dbReference>
<dbReference type="RefSeq" id="NP_039720.1">
    <property type="nucleotide sequence ID" value="NC_001335.1"/>
</dbReference>
<dbReference type="SMR" id="Q05266"/>
<dbReference type="GeneID" id="2942988"/>
<dbReference type="KEGG" id="vg:2942988"/>
<dbReference type="OrthoDB" id="18944at10239"/>
<dbReference type="Proteomes" id="UP000002123">
    <property type="component" value="Genome"/>
</dbReference>
<dbReference type="GO" id="GO:0009055">
    <property type="term" value="F:electron transfer activity"/>
    <property type="evidence" value="ECO:0007669"/>
    <property type="project" value="TreeGrafter"/>
</dbReference>
<dbReference type="CDD" id="cd02976">
    <property type="entry name" value="NrdH"/>
    <property type="match status" value="1"/>
</dbReference>
<dbReference type="Gene3D" id="3.40.30.10">
    <property type="entry name" value="Glutaredoxin"/>
    <property type="match status" value="1"/>
</dbReference>
<dbReference type="InterPro" id="IPR011911">
    <property type="entry name" value="GlrX_YruB"/>
</dbReference>
<dbReference type="InterPro" id="IPR002109">
    <property type="entry name" value="Glutaredoxin"/>
</dbReference>
<dbReference type="InterPro" id="IPR051548">
    <property type="entry name" value="Grx-like_ET"/>
</dbReference>
<dbReference type="InterPro" id="IPR036249">
    <property type="entry name" value="Thioredoxin-like_sf"/>
</dbReference>
<dbReference type="NCBIfam" id="TIGR02196">
    <property type="entry name" value="GlrX_YruB"/>
    <property type="match status" value="1"/>
</dbReference>
<dbReference type="PANTHER" id="PTHR34386">
    <property type="entry name" value="GLUTAREDOXIN"/>
    <property type="match status" value="1"/>
</dbReference>
<dbReference type="PANTHER" id="PTHR34386:SF1">
    <property type="entry name" value="GLUTAREDOXIN-LIKE PROTEIN NRDH"/>
    <property type="match status" value="1"/>
</dbReference>
<dbReference type="Pfam" id="PF00462">
    <property type="entry name" value="Glutaredoxin"/>
    <property type="match status" value="1"/>
</dbReference>
<dbReference type="SUPFAM" id="SSF52833">
    <property type="entry name" value="Thioredoxin-like"/>
    <property type="match status" value="1"/>
</dbReference>
<dbReference type="PROSITE" id="PS51354">
    <property type="entry name" value="GLUTAREDOXIN_2"/>
    <property type="match status" value="1"/>
</dbReference>
<proteinExistence type="predicted"/>
<name>VG56_BPML5</name>
<evidence type="ECO:0000255" key="1">
    <source>
        <dbReference type="PROSITE-ProRule" id="PRU00686"/>
    </source>
</evidence>
<sequence>MYGDRYIDWDGAHVRTLFAPVTVYTRPGCKPCERVKDKLTAAGIDFDAVDVTANSEAYDYVTKVLNAMSVPVVVTDTHKPILGYQPDQLDELIDYYTASETGL</sequence>
<protein>
    <recommendedName>
        <fullName>Gene 56 protein</fullName>
    </recommendedName>
    <alternativeName>
        <fullName>Gp56</fullName>
    </alternativeName>
</protein>
<feature type="chain" id="PRO_0000164787" description="Gene 56 protein">
    <location>
        <begin position="1"/>
        <end position="103"/>
    </location>
</feature>
<feature type="domain" description="Glutaredoxin" evidence="1">
    <location>
        <begin position="9"/>
        <end position="103"/>
    </location>
</feature>
<organism>
    <name type="scientific">Mycobacterium phage L5</name>
    <name type="common">Mycobacteriophage L5</name>
    <dbReference type="NCBI Taxonomy" id="31757"/>
    <lineage>
        <taxon>Viruses</taxon>
        <taxon>Duplodnaviria</taxon>
        <taxon>Heunggongvirae</taxon>
        <taxon>Uroviricota</taxon>
        <taxon>Caudoviricetes</taxon>
        <taxon>Fromanvirus</taxon>
    </lineage>
</organism>
<accession>Q05266</accession>
<gene>
    <name type="primary">56</name>
</gene>
<reference key="1">
    <citation type="journal article" date="1993" name="Mol. Microbiol.">
        <title>DNA sequence, structure and gene expression of mycobacteriophage L5: a phage system for mycobacterial genetics.</title>
        <authorList>
            <person name="Hatfull G.F."/>
            <person name="Sarkis G.J."/>
        </authorList>
    </citation>
    <scope>NUCLEOTIDE SEQUENCE [LARGE SCALE GENOMIC DNA]</scope>
</reference>
<organismHost>
    <name type="scientific">Mycobacterium</name>
    <dbReference type="NCBI Taxonomy" id="1763"/>
</organismHost>
<keyword id="KW-1185">Reference proteome</keyword>